<protein>
    <recommendedName>
        <fullName evidence="4">Toxin Iob1</fullName>
    </recommendedName>
</protein>
<dbReference type="SMR" id="P58609"/>
<dbReference type="GO" id="GO:0005576">
    <property type="term" value="C:extracellular region"/>
    <property type="evidence" value="ECO:0007669"/>
    <property type="project" value="UniProtKB-SubCell"/>
</dbReference>
<dbReference type="GO" id="GO:0019855">
    <property type="term" value="F:calcium channel inhibitor activity"/>
    <property type="evidence" value="ECO:0007669"/>
    <property type="project" value="InterPro"/>
</dbReference>
<dbReference type="GO" id="GO:0090729">
    <property type="term" value="F:toxin activity"/>
    <property type="evidence" value="ECO:0007669"/>
    <property type="project" value="UniProtKB-KW"/>
</dbReference>
<dbReference type="InterPro" id="IPR012325">
    <property type="entry name" value="Assassin_bug_toxin-like"/>
</dbReference>
<dbReference type="Pfam" id="PF08117">
    <property type="entry name" value="Toxin_30"/>
    <property type="match status" value="1"/>
</dbReference>
<dbReference type="SUPFAM" id="SSF57059">
    <property type="entry name" value="omega toxin-like"/>
    <property type="match status" value="1"/>
</dbReference>
<dbReference type="PROSITE" id="PS60010">
    <property type="entry name" value="ASSASSIN_BUG_TOXIN"/>
    <property type="match status" value="1"/>
</dbReference>
<evidence type="ECO:0000250" key="1">
    <source>
        <dbReference type="UniProtKB" id="P58606"/>
    </source>
</evidence>
<evidence type="ECO:0000250" key="2">
    <source>
        <dbReference type="UniProtKB" id="P58608"/>
    </source>
</evidence>
<evidence type="ECO:0000269" key="3">
    <source>
    </source>
</evidence>
<evidence type="ECO:0000303" key="4">
    <source>
    </source>
</evidence>
<evidence type="ECO:0000305" key="5"/>
<proteinExistence type="evidence at protein level"/>
<feature type="peptide" id="PRO_0000044890" description="Toxin Iob1" evidence="3">
    <location>
        <begin position="1"/>
        <end position="36"/>
    </location>
</feature>
<feature type="disulfide bond" evidence="1">
    <location>
        <begin position="6"/>
        <end position="21"/>
    </location>
</feature>
<feature type="disulfide bond" evidence="1">
    <location>
        <begin position="13"/>
        <end position="26"/>
    </location>
</feature>
<feature type="disulfide bond" evidence="1">
    <location>
        <begin position="20"/>
        <end position="33"/>
    </location>
</feature>
<organism>
    <name type="scientific">Isyndus obscurus</name>
    <name type="common">Assassin bug</name>
    <dbReference type="NCBI Taxonomy" id="184615"/>
    <lineage>
        <taxon>Eukaryota</taxon>
        <taxon>Metazoa</taxon>
        <taxon>Ecdysozoa</taxon>
        <taxon>Arthropoda</taxon>
        <taxon>Hexapoda</taxon>
        <taxon>Insecta</taxon>
        <taxon>Pterygota</taxon>
        <taxon>Neoptera</taxon>
        <taxon>Paraneoptera</taxon>
        <taxon>Hemiptera</taxon>
        <taxon>Heteroptera</taxon>
        <taxon>Panheteroptera</taxon>
        <taxon>Cimicomorpha</taxon>
        <taxon>Reduviidae</taxon>
        <taxon>Harpactorinae</taxon>
        <taxon>Harpactorini</taxon>
        <taxon>Isyndus</taxon>
    </lineage>
</organism>
<sequence>GADEDCLPRGSKCLGENKQCCEKTTCMFYANRCVGI</sequence>
<comment type="function">
    <text evidence="2">Binds reversibly and blocks N-type voltage-gated calcium channels (Cav).</text>
</comment>
<comment type="subcellular location">
    <subcellularLocation>
        <location evidence="3">Secreted</location>
    </subcellularLocation>
</comment>
<comment type="domain">
    <text evidence="5">The presence of a 'disulfide through disulfide knot' structurally defines this protein as a knottin.</text>
</comment>
<comment type="mass spectrometry"/>
<comment type="similarity">
    <text evidence="5">Belongs to the venom Ptu1-like knottin family.</text>
</comment>
<accession>P58609</accession>
<keyword id="KW-0108">Calcium channel impairing toxin</keyword>
<keyword id="KW-0903">Direct protein sequencing</keyword>
<keyword id="KW-1015">Disulfide bond</keyword>
<keyword id="KW-0872">Ion channel impairing toxin</keyword>
<keyword id="KW-0960">Knottin</keyword>
<keyword id="KW-0528">Neurotoxin</keyword>
<keyword id="KW-0964">Secreted</keyword>
<keyword id="KW-0800">Toxin</keyword>
<keyword id="KW-1218">Voltage-gated calcium channel impairing toxin</keyword>
<name>PLK1_ISYOB</name>
<reference key="1">
    <citation type="journal article" date="2001" name="FEBS Lett.">
        <title>Novel peptides from assassin bugs (Hemiptera: Reduviidae): isolation, chemical and biological characterization.</title>
        <authorList>
            <person name="Corzo G."/>
            <person name="Adachi-Akahane S."/>
            <person name="Nagao T."/>
            <person name="Kusui Y."/>
            <person name="Nakajima T."/>
        </authorList>
    </citation>
    <scope>PROTEIN SEQUENCE</scope>
    <scope>MASS SPECTROMETRY</scope>
    <scope>SUBCELLULAR LOCATION</scope>
    <source>
        <tissue>Saliva</tissue>
    </source>
</reference>